<comment type="function">
    <text evidence="2">Mitochondrial trifunctional enzyme catalyzes the last three of the four reactions of the mitochondrial beta-oxidation pathway. The mitochondrial beta-oxidation pathway is the major energy-producing process in tissues and is performed through four consecutive reactions breaking down fatty acids into acetyl-CoA. Among the enzymes involved in this pathway, the trifunctional enzyme exhibits specificity for long-chain fatty acids. Mitochondrial trifunctional enzyme is a heterotetrameric complex composed of two proteins, the trifunctional enzyme subunit alpha/HADHA carries the 2,3-enoyl-CoA hydratase and the 3-hydroxyacyl-CoA dehydrogenase activities, while the trifunctional enzyme subunit beta/HADHB described here bears the 3-ketoacyl-CoA thiolase activity.</text>
</comment>
<comment type="catalytic activity">
    <reaction evidence="2">
        <text>an acyl-CoA + acetyl-CoA = a 3-oxoacyl-CoA + CoA</text>
        <dbReference type="Rhea" id="RHEA:21564"/>
        <dbReference type="ChEBI" id="CHEBI:57287"/>
        <dbReference type="ChEBI" id="CHEBI:57288"/>
        <dbReference type="ChEBI" id="CHEBI:58342"/>
        <dbReference type="ChEBI" id="CHEBI:90726"/>
        <dbReference type="EC" id="2.3.1.16"/>
    </reaction>
    <physiologicalReaction direction="right-to-left" evidence="2">
        <dbReference type="Rhea" id="RHEA:21566"/>
    </physiologicalReaction>
</comment>
<comment type="catalytic activity">
    <reaction evidence="2">
        <text>butanoyl-CoA + acetyl-CoA = 3-oxohexanoyl-CoA + CoA</text>
        <dbReference type="Rhea" id="RHEA:31111"/>
        <dbReference type="ChEBI" id="CHEBI:57287"/>
        <dbReference type="ChEBI" id="CHEBI:57288"/>
        <dbReference type="ChEBI" id="CHEBI:57371"/>
        <dbReference type="ChEBI" id="CHEBI:62418"/>
    </reaction>
    <physiologicalReaction direction="right-to-left" evidence="2">
        <dbReference type="Rhea" id="RHEA:31113"/>
    </physiologicalReaction>
</comment>
<comment type="catalytic activity">
    <reaction evidence="2">
        <text>hexanoyl-CoA + acetyl-CoA = 3-oxooctanoyl-CoA + CoA</text>
        <dbReference type="Rhea" id="RHEA:31203"/>
        <dbReference type="ChEBI" id="CHEBI:57287"/>
        <dbReference type="ChEBI" id="CHEBI:57288"/>
        <dbReference type="ChEBI" id="CHEBI:62619"/>
        <dbReference type="ChEBI" id="CHEBI:62620"/>
    </reaction>
    <physiologicalReaction direction="right-to-left" evidence="2">
        <dbReference type="Rhea" id="RHEA:31205"/>
    </physiologicalReaction>
</comment>
<comment type="catalytic activity">
    <reaction evidence="2">
        <text>octanoyl-CoA + acetyl-CoA = 3-oxodecanoyl-CoA + CoA</text>
        <dbReference type="Rhea" id="RHEA:31087"/>
        <dbReference type="ChEBI" id="CHEBI:57287"/>
        <dbReference type="ChEBI" id="CHEBI:57288"/>
        <dbReference type="ChEBI" id="CHEBI:57386"/>
        <dbReference type="ChEBI" id="CHEBI:62548"/>
    </reaction>
    <physiologicalReaction direction="right-to-left" evidence="2">
        <dbReference type="Rhea" id="RHEA:31089"/>
    </physiologicalReaction>
</comment>
<comment type="catalytic activity">
    <reaction evidence="2">
        <text>decanoyl-CoA + acetyl-CoA = 3-oxododecanoyl-CoA + CoA</text>
        <dbReference type="Rhea" id="RHEA:31183"/>
        <dbReference type="ChEBI" id="CHEBI:57287"/>
        <dbReference type="ChEBI" id="CHEBI:57288"/>
        <dbReference type="ChEBI" id="CHEBI:61430"/>
        <dbReference type="ChEBI" id="CHEBI:62615"/>
    </reaction>
    <physiologicalReaction direction="right-to-left" evidence="2">
        <dbReference type="Rhea" id="RHEA:31185"/>
    </physiologicalReaction>
</comment>
<comment type="catalytic activity">
    <reaction evidence="2">
        <text>dodecanoyl-CoA + acetyl-CoA = 3-oxotetradecanoyl-CoA + CoA</text>
        <dbReference type="Rhea" id="RHEA:31091"/>
        <dbReference type="ChEBI" id="CHEBI:57287"/>
        <dbReference type="ChEBI" id="CHEBI:57288"/>
        <dbReference type="ChEBI" id="CHEBI:57375"/>
        <dbReference type="ChEBI" id="CHEBI:62543"/>
    </reaction>
    <physiologicalReaction direction="right-to-left" evidence="2">
        <dbReference type="Rhea" id="RHEA:31093"/>
    </physiologicalReaction>
</comment>
<comment type="catalytic activity">
    <reaction evidence="2">
        <text>tetradecanoyl-CoA + acetyl-CoA = 3-oxohexadecanoyl-CoA + CoA</text>
        <dbReference type="Rhea" id="RHEA:18161"/>
        <dbReference type="ChEBI" id="CHEBI:57287"/>
        <dbReference type="ChEBI" id="CHEBI:57288"/>
        <dbReference type="ChEBI" id="CHEBI:57349"/>
        <dbReference type="ChEBI" id="CHEBI:57385"/>
        <dbReference type="EC" id="2.3.1.155"/>
    </reaction>
    <physiologicalReaction direction="right-to-left" evidence="2">
        <dbReference type="Rhea" id="RHEA:18163"/>
    </physiologicalReaction>
</comment>
<comment type="pathway">
    <text evidence="2">Lipid metabolism; fatty acid beta-oxidation.</text>
</comment>
<comment type="subunit">
    <text evidence="2 3 4">Heterotetramer of 2 alpha/HADHA and 2 beta/HADHB subunits; forms the mitochondrial trifunctional enzyme (By similarity). Also purified as higher order heterooligomers including a 4 alpha/HADHA and 4 beta/HADHB heterooligomer which physiological significance remains unclear (PubMed:1730633). The mitochondrial trifunctional enzyme interacts with MTLN (By similarity). Interacts with RSAD2/viperin (By similarity).</text>
</comment>
<comment type="subcellular location">
    <subcellularLocation>
        <location evidence="2">Mitochondrion</location>
    </subcellularLocation>
    <subcellularLocation>
        <location evidence="2">Mitochondrion inner membrane</location>
    </subcellularLocation>
    <subcellularLocation>
        <location evidence="2">Mitochondrion outer membrane</location>
    </subcellularLocation>
    <subcellularLocation>
        <location evidence="2">Endoplasmic reticulum</location>
    </subcellularLocation>
    <text evidence="2">Protein stability and association with membranes require HADHA.</text>
</comment>
<comment type="similarity">
    <text evidence="5">Belongs to the thiolase-like superfamily. Thiolase family.</text>
</comment>
<evidence type="ECO:0000250" key="1"/>
<evidence type="ECO:0000250" key="2">
    <source>
        <dbReference type="UniProtKB" id="P55084"/>
    </source>
</evidence>
<evidence type="ECO:0000250" key="3">
    <source>
        <dbReference type="UniProtKB" id="Q99JY0"/>
    </source>
</evidence>
<evidence type="ECO:0000269" key="4">
    <source>
    </source>
</evidence>
<evidence type="ECO:0000305" key="5"/>
<proteinExistence type="evidence at protein level"/>
<gene>
    <name type="primary">Hadhb</name>
</gene>
<organism>
    <name type="scientific">Rattus norvegicus</name>
    <name type="common">Rat</name>
    <dbReference type="NCBI Taxonomy" id="10116"/>
    <lineage>
        <taxon>Eukaryota</taxon>
        <taxon>Metazoa</taxon>
        <taxon>Chordata</taxon>
        <taxon>Craniata</taxon>
        <taxon>Vertebrata</taxon>
        <taxon>Euteleostomi</taxon>
        <taxon>Mammalia</taxon>
        <taxon>Eutheria</taxon>
        <taxon>Euarchontoglires</taxon>
        <taxon>Glires</taxon>
        <taxon>Rodentia</taxon>
        <taxon>Myomorpha</taxon>
        <taxon>Muroidea</taxon>
        <taxon>Muridae</taxon>
        <taxon>Murinae</taxon>
        <taxon>Rattus</taxon>
    </lineage>
</organism>
<reference key="1">
    <citation type="journal article" date="1993" name="J. Biol. Chem.">
        <title>Molecular cloning of the cDNAs for the subunits of rat mitochondrial fatty acid beta-oxidation multienzyme complex. Structural and functional relationships to other mitochondrial and peroxisomal beta-oxidation enzymes.</title>
        <authorList>
            <person name="Kamijo T."/>
            <person name="Aoyama T."/>
            <person name="Miyazaki J."/>
            <person name="Hashimoto T."/>
        </authorList>
    </citation>
    <scope>NUCLEOTIDE SEQUENCE [MRNA]</scope>
    <source>
        <strain>Wistar</strain>
    </source>
</reference>
<reference key="2">
    <citation type="journal article" date="2004" name="Genome Res.">
        <title>The status, quality, and expansion of the NIH full-length cDNA project: the Mammalian Gene Collection (MGC).</title>
        <authorList>
            <consortium name="The MGC Project Team"/>
        </authorList>
    </citation>
    <scope>NUCLEOTIDE SEQUENCE [LARGE SCALE MRNA]</scope>
    <source>
        <tissue>Pituitary</tissue>
    </source>
</reference>
<reference key="3">
    <citation type="journal article" date="1992" name="J. Biol. Chem.">
        <title>Novel fatty acid beta-oxidation enzymes in rat liver mitochondria. II. Purification and properties of enoyl-coenzyme A (CoA) hydratase/3-hydroxyacyl-CoA dehydrogenase/3-ketoacyl-CoA thiolase trifunctional protein.</title>
        <authorList>
            <person name="Uchida Y."/>
            <person name="Izai K."/>
            <person name="Orii T."/>
            <person name="Hashimoto T."/>
        </authorList>
    </citation>
    <scope>SUBUNIT</scope>
</reference>
<keyword id="KW-0007">Acetylation</keyword>
<keyword id="KW-0012">Acyltransferase</keyword>
<keyword id="KW-0256">Endoplasmic reticulum</keyword>
<keyword id="KW-0276">Fatty acid metabolism</keyword>
<keyword id="KW-0443">Lipid metabolism</keyword>
<keyword id="KW-0472">Membrane</keyword>
<keyword id="KW-0496">Mitochondrion</keyword>
<keyword id="KW-0999">Mitochondrion inner membrane</keyword>
<keyword id="KW-1000">Mitochondrion outer membrane</keyword>
<keyword id="KW-1185">Reference proteome</keyword>
<keyword id="KW-0808">Transferase</keyword>
<keyword id="KW-0809">Transit peptide</keyword>
<name>ECHB_RAT</name>
<accession>Q60587</accession>
<sequence>MTTILTSTFRNLSTTSKWALRFSVRPLSCSSQVQSAPAVQTKSKKTLAKPNLKNIVVVEGVRIPFLLSGTSYKDLMPHDLARAALSGLLYRTNIPKDVVDYIIFGTVIQEVKTSNVAREAALGAGFSDKTPAHTVTMACISSNQAMTTAVGLIASGQCDVVVAGGVELMSDVPIRHSRNMRKMMLDLNKAKTLAQRLSLLTKFRLNFLSPELPAVAEFSTNETMGHSADRLAAAFAVSRMEQDKYALRSHSLAKKAQDEGHLSDIVPFKVPGKDTVSKDNGIRPSSLEQMAKLKPAFIKPYGTVTAANSSFLTDGASAMLIMSEDRALAMGYKPKAYLRDFIYVSQDPKDQLLLGPTYATPKVLEKAGLTMNDIDAFEFHEAFSGQILANFKAMDSDWFAQNYMGRKTKVGAPPLEKFNIWGGSLSLGHPFGATGCRLVMAAANRLRKDGGQYALVAACAAGGQGHAMIVEAYPK</sequence>
<protein>
    <recommendedName>
        <fullName>Trifunctional enzyme subunit beta, mitochondrial</fullName>
    </recommendedName>
    <alternativeName>
        <fullName>TP-beta</fullName>
    </alternativeName>
    <domain>
        <recommendedName>
            <fullName>3-ketoacyl-CoA thiolase</fullName>
            <ecNumber evidence="2">2.3.1.155</ecNumber>
            <ecNumber evidence="2">2.3.1.16</ecNumber>
        </recommendedName>
        <alternativeName>
            <fullName>Acetyl-CoA acyltransferase</fullName>
        </alternativeName>
        <alternativeName>
            <fullName>Beta-ketothiolase</fullName>
        </alternativeName>
    </domain>
</protein>
<feature type="transit peptide" description="Mitochondrion" evidence="1">
    <location>
        <begin position="1"/>
        <end position="34"/>
    </location>
</feature>
<feature type="chain" id="PRO_0000034084" description="Trifunctional enzyme subunit beta, mitochondrial">
    <location>
        <begin position="35"/>
        <end position="475"/>
    </location>
</feature>
<feature type="intramembrane region" evidence="2">
    <location>
        <begin position="174"/>
        <end position="221"/>
    </location>
</feature>
<feature type="active site" description="Acyl-thioester intermediate" evidence="2">
    <location>
        <position position="139"/>
    </location>
</feature>
<feature type="active site" description="Proton donor/acceptor" evidence="2">
    <location>
        <position position="459"/>
    </location>
</feature>
<feature type="site" description="Increases nucleophilicity of active site Cys" evidence="2">
    <location>
        <position position="429"/>
    </location>
</feature>
<feature type="modified residue" description="N6-succinyllysine" evidence="3">
    <location>
        <position position="53"/>
    </location>
</feature>
<feature type="modified residue" description="N6-acetyllysine; alternate" evidence="2">
    <location>
        <position position="73"/>
    </location>
</feature>
<feature type="modified residue" description="N6-succinyllysine; alternate" evidence="3">
    <location>
        <position position="73"/>
    </location>
</feature>
<feature type="modified residue" description="N6-acetyllysine; alternate" evidence="2">
    <location>
        <position position="189"/>
    </location>
</feature>
<feature type="modified residue" description="N6-succinyllysine; alternate" evidence="3">
    <location>
        <position position="189"/>
    </location>
</feature>
<feature type="modified residue" description="N6-succinyllysine" evidence="3">
    <location>
        <position position="191"/>
    </location>
</feature>
<feature type="modified residue" description="N6-succinyllysine" evidence="3">
    <location>
        <position position="273"/>
    </location>
</feature>
<feature type="modified residue" description="N6-succinyllysine" evidence="3">
    <location>
        <position position="292"/>
    </location>
</feature>
<feature type="modified residue" description="N6-acetyllysine; alternate" evidence="3">
    <location>
        <position position="294"/>
    </location>
</feature>
<feature type="modified residue" description="N6-succinyllysine; alternate" evidence="3">
    <location>
        <position position="294"/>
    </location>
</feature>
<feature type="modified residue" description="N6-acetyllysine" evidence="3">
    <location>
        <position position="299"/>
    </location>
</feature>
<feature type="modified residue" description="N6-acetyllysine; alternate" evidence="3">
    <location>
        <position position="333"/>
    </location>
</feature>
<feature type="modified residue" description="N6-succinyllysine; alternate" evidence="3">
    <location>
        <position position="333"/>
    </location>
</feature>
<feature type="modified residue" description="N6-acetyllysine" evidence="3">
    <location>
        <position position="349"/>
    </location>
</feature>
<feature type="modified residue" description="N6-acetyllysine" evidence="3">
    <location>
        <position position="362"/>
    </location>
</feature>
<dbReference type="EC" id="2.3.1.155" evidence="2"/>
<dbReference type="EC" id="2.3.1.16" evidence="2"/>
<dbReference type="EMBL" id="D16479">
    <property type="protein sequence ID" value="BAA03940.1"/>
    <property type="molecule type" value="mRNA"/>
</dbReference>
<dbReference type="EMBL" id="BC060545">
    <property type="protein sequence ID" value="AAH60545.1"/>
    <property type="molecule type" value="mRNA"/>
</dbReference>
<dbReference type="PIR" id="B49681">
    <property type="entry name" value="B49681"/>
</dbReference>
<dbReference type="RefSeq" id="NP_598302.1">
    <property type="nucleotide sequence ID" value="NM_133618.3"/>
</dbReference>
<dbReference type="RefSeq" id="XP_006239848.2">
    <property type="nucleotide sequence ID" value="XM_006239786.4"/>
</dbReference>
<dbReference type="RefSeq" id="XP_006239850.1">
    <property type="nucleotide sequence ID" value="XM_006239788.1"/>
</dbReference>
<dbReference type="RefSeq" id="XP_006239851.1">
    <property type="nucleotide sequence ID" value="XM_006239789.3"/>
</dbReference>
<dbReference type="RefSeq" id="XP_038967674.1">
    <property type="nucleotide sequence ID" value="XM_039111746.2"/>
</dbReference>
<dbReference type="SMR" id="Q60587"/>
<dbReference type="BioGRID" id="251158">
    <property type="interactions" value="5"/>
</dbReference>
<dbReference type="FunCoup" id="Q60587">
    <property type="interactions" value="1366"/>
</dbReference>
<dbReference type="IntAct" id="Q60587">
    <property type="interactions" value="4"/>
</dbReference>
<dbReference type="MINT" id="Q60587"/>
<dbReference type="STRING" id="10116.ENSRNOP00000072480"/>
<dbReference type="CarbonylDB" id="Q60587"/>
<dbReference type="GlyGen" id="Q60587">
    <property type="glycosylation" value="5 sites, 1 O-linked glycan (5 sites)"/>
</dbReference>
<dbReference type="iPTMnet" id="Q60587"/>
<dbReference type="PhosphoSitePlus" id="Q60587"/>
<dbReference type="SwissPalm" id="Q60587"/>
<dbReference type="jPOST" id="Q60587"/>
<dbReference type="PaxDb" id="10116-ENSRNOP00000014637"/>
<dbReference type="Ensembl" id="ENSRNOT00000014637.7">
    <property type="protein sequence ID" value="ENSRNOP00000014637.5"/>
    <property type="gene ID" value="ENSRNOG00000010800.7"/>
</dbReference>
<dbReference type="GeneID" id="171155"/>
<dbReference type="KEGG" id="rno:171155"/>
<dbReference type="AGR" id="RGD:620513"/>
<dbReference type="CTD" id="3032"/>
<dbReference type="RGD" id="620513">
    <property type="gene designation" value="Hadhb"/>
</dbReference>
<dbReference type="eggNOG" id="KOG1392">
    <property type="taxonomic scope" value="Eukaryota"/>
</dbReference>
<dbReference type="GeneTree" id="ENSGT01030000234626"/>
<dbReference type="InParanoid" id="Q60587"/>
<dbReference type="OrthoDB" id="28810at9989"/>
<dbReference type="PhylomeDB" id="Q60587"/>
<dbReference type="TreeFam" id="TF315243"/>
<dbReference type="Reactome" id="R-RNO-1482798">
    <property type="pathway name" value="Acyl chain remodeling of CL"/>
</dbReference>
<dbReference type="Reactome" id="R-RNO-77285">
    <property type="pathway name" value="Beta oxidation of myristoyl-CoA to lauroyl-CoA"/>
</dbReference>
<dbReference type="Reactome" id="R-RNO-77305">
    <property type="pathway name" value="Beta oxidation of palmitoyl-CoA to myristoyl-CoA"/>
</dbReference>
<dbReference type="Reactome" id="R-RNO-77310">
    <property type="pathway name" value="Beta oxidation of lauroyl-CoA to decanoyl-CoA-CoA"/>
</dbReference>
<dbReference type="Reactome" id="R-RNO-77346">
    <property type="pathway name" value="Beta oxidation of decanoyl-CoA to octanoyl-CoA-CoA"/>
</dbReference>
<dbReference type="Reactome" id="R-RNO-77348">
    <property type="pathway name" value="Beta oxidation of octanoyl-CoA to hexanoyl-CoA"/>
</dbReference>
<dbReference type="Reactome" id="R-RNO-77350">
    <property type="pathway name" value="Beta oxidation of hexanoyl-CoA to butanoyl-CoA"/>
</dbReference>
<dbReference type="UniPathway" id="UPA00659"/>
<dbReference type="PRO" id="PR:Q60587"/>
<dbReference type="Proteomes" id="UP000002494">
    <property type="component" value="Chromosome 6"/>
</dbReference>
<dbReference type="Bgee" id="ENSRNOG00000010800">
    <property type="expression patterns" value="Expressed in heart and 20 other cell types or tissues"/>
</dbReference>
<dbReference type="ExpressionAtlas" id="Q60587">
    <property type="expression patterns" value="baseline and differential"/>
</dbReference>
<dbReference type="GO" id="GO:0005783">
    <property type="term" value="C:endoplasmic reticulum"/>
    <property type="evidence" value="ECO:0000250"/>
    <property type="project" value="UniProtKB"/>
</dbReference>
<dbReference type="GO" id="GO:0016507">
    <property type="term" value="C:mitochondrial fatty acid beta-oxidation multienzyme complex"/>
    <property type="evidence" value="ECO:0000314"/>
    <property type="project" value="RGD"/>
</dbReference>
<dbReference type="GO" id="GO:0005743">
    <property type="term" value="C:mitochondrial inner membrane"/>
    <property type="evidence" value="ECO:0000250"/>
    <property type="project" value="UniProtKB"/>
</dbReference>
<dbReference type="GO" id="GO:0042645">
    <property type="term" value="C:mitochondrial nucleoid"/>
    <property type="evidence" value="ECO:0000266"/>
    <property type="project" value="RGD"/>
</dbReference>
<dbReference type="GO" id="GO:0005741">
    <property type="term" value="C:mitochondrial outer membrane"/>
    <property type="evidence" value="ECO:0000250"/>
    <property type="project" value="UniProtKB"/>
</dbReference>
<dbReference type="GO" id="GO:0005739">
    <property type="term" value="C:mitochondrion"/>
    <property type="evidence" value="ECO:0000266"/>
    <property type="project" value="RGD"/>
</dbReference>
<dbReference type="GO" id="GO:0005654">
    <property type="term" value="C:nucleoplasm"/>
    <property type="evidence" value="ECO:0007669"/>
    <property type="project" value="Ensembl"/>
</dbReference>
<dbReference type="GO" id="GO:0003985">
    <property type="term" value="F:acetyl-CoA C-acetyltransferase activity"/>
    <property type="evidence" value="ECO:0000266"/>
    <property type="project" value="RGD"/>
</dbReference>
<dbReference type="GO" id="GO:0003988">
    <property type="term" value="F:acetyl-CoA C-acyltransferase activity"/>
    <property type="evidence" value="ECO:0000314"/>
    <property type="project" value="RGD"/>
</dbReference>
<dbReference type="GO" id="GO:0050633">
    <property type="term" value="F:acetyl-CoA C-myristoyltransferase activity"/>
    <property type="evidence" value="ECO:0007669"/>
    <property type="project" value="UniProtKB-EC"/>
</dbReference>
<dbReference type="GO" id="GO:0106222">
    <property type="term" value="F:lncRNA binding"/>
    <property type="evidence" value="ECO:0000266"/>
    <property type="project" value="RGD"/>
</dbReference>
<dbReference type="GO" id="GO:0044877">
    <property type="term" value="F:protein-containing complex binding"/>
    <property type="evidence" value="ECO:0000315"/>
    <property type="project" value="RGD"/>
</dbReference>
<dbReference type="GO" id="GO:0071222">
    <property type="term" value="P:cellular response to lipopolysaccharide"/>
    <property type="evidence" value="ECO:0000266"/>
    <property type="project" value="RGD"/>
</dbReference>
<dbReference type="GO" id="GO:0006635">
    <property type="term" value="P:fatty acid beta-oxidation"/>
    <property type="evidence" value="ECO:0000314"/>
    <property type="project" value="RGD"/>
</dbReference>
<dbReference type="GO" id="GO:0010467">
    <property type="term" value="P:gene expression"/>
    <property type="evidence" value="ECO:0000266"/>
    <property type="project" value="RGD"/>
</dbReference>
<dbReference type="CDD" id="cd00751">
    <property type="entry name" value="thiolase"/>
    <property type="match status" value="1"/>
</dbReference>
<dbReference type="FunFam" id="3.40.47.10:FF:000020">
    <property type="entry name" value="Putative trifunctional enzyme subunit beta mitochondrial"/>
    <property type="match status" value="1"/>
</dbReference>
<dbReference type="Gene3D" id="3.40.47.10">
    <property type="match status" value="1"/>
</dbReference>
<dbReference type="InterPro" id="IPR002155">
    <property type="entry name" value="Thiolase"/>
</dbReference>
<dbReference type="InterPro" id="IPR016039">
    <property type="entry name" value="Thiolase-like"/>
</dbReference>
<dbReference type="InterPro" id="IPR020615">
    <property type="entry name" value="Thiolase_acyl_enz_int_AS"/>
</dbReference>
<dbReference type="InterPro" id="IPR020610">
    <property type="entry name" value="Thiolase_AS"/>
</dbReference>
<dbReference type="InterPro" id="IPR020617">
    <property type="entry name" value="Thiolase_C"/>
</dbReference>
<dbReference type="InterPro" id="IPR020613">
    <property type="entry name" value="Thiolase_CS"/>
</dbReference>
<dbReference type="InterPro" id="IPR020616">
    <property type="entry name" value="Thiolase_N"/>
</dbReference>
<dbReference type="NCBIfam" id="TIGR01930">
    <property type="entry name" value="AcCoA-C-Actrans"/>
    <property type="match status" value="1"/>
</dbReference>
<dbReference type="PANTHER" id="PTHR18919">
    <property type="entry name" value="ACETYL-COA C-ACYLTRANSFERASE"/>
    <property type="match status" value="1"/>
</dbReference>
<dbReference type="PANTHER" id="PTHR18919:SF153">
    <property type="entry name" value="TRIFUNCTIONAL ENZYME SUBUNIT BETA, MITOCHONDRIAL"/>
    <property type="match status" value="1"/>
</dbReference>
<dbReference type="Pfam" id="PF02803">
    <property type="entry name" value="Thiolase_C"/>
    <property type="match status" value="1"/>
</dbReference>
<dbReference type="Pfam" id="PF00108">
    <property type="entry name" value="Thiolase_N"/>
    <property type="match status" value="1"/>
</dbReference>
<dbReference type="SUPFAM" id="SSF53901">
    <property type="entry name" value="Thiolase-like"/>
    <property type="match status" value="2"/>
</dbReference>
<dbReference type="PROSITE" id="PS00098">
    <property type="entry name" value="THIOLASE_1"/>
    <property type="match status" value="1"/>
</dbReference>
<dbReference type="PROSITE" id="PS00737">
    <property type="entry name" value="THIOLASE_2"/>
    <property type="match status" value="1"/>
</dbReference>
<dbReference type="PROSITE" id="PS00099">
    <property type="entry name" value="THIOLASE_3"/>
    <property type="match status" value="1"/>
</dbReference>